<feature type="chain" id="PRO_1000098195" description="6,7-dimethyl-8-ribityllumazine synthase">
    <location>
        <begin position="1"/>
        <end position="133"/>
    </location>
</feature>
<feature type="active site" description="Proton donor" evidence="1">
    <location>
        <position position="75"/>
    </location>
</feature>
<feature type="binding site" evidence="1">
    <location>
        <position position="11"/>
    </location>
    <ligand>
        <name>5-amino-6-(D-ribitylamino)uracil</name>
        <dbReference type="ChEBI" id="CHEBI:15934"/>
    </ligand>
</feature>
<feature type="binding site" evidence="1">
    <location>
        <begin position="43"/>
        <end position="45"/>
    </location>
    <ligand>
        <name>5-amino-6-(D-ribitylamino)uracil</name>
        <dbReference type="ChEBI" id="CHEBI:15934"/>
    </ligand>
</feature>
<feature type="binding site" evidence="1">
    <location>
        <begin position="67"/>
        <end position="69"/>
    </location>
    <ligand>
        <name>5-amino-6-(D-ribitylamino)uracil</name>
        <dbReference type="ChEBI" id="CHEBI:15934"/>
    </ligand>
</feature>
<feature type="binding site" evidence="1">
    <location>
        <begin position="72"/>
        <end position="73"/>
    </location>
    <ligand>
        <name>(2S)-2-hydroxy-3-oxobutyl phosphate</name>
        <dbReference type="ChEBI" id="CHEBI:58830"/>
    </ligand>
</feature>
<feature type="binding site" evidence="1">
    <location>
        <position position="100"/>
    </location>
    <ligand>
        <name>5-amino-6-(D-ribitylamino)uracil</name>
        <dbReference type="ChEBI" id="CHEBI:15934"/>
    </ligand>
</feature>
<feature type="binding site" evidence="1">
    <location>
        <position position="115"/>
    </location>
    <ligand>
        <name>(2S)-2-hydroxy-3-oxobutyl phosphate</name>
        <dbReference type="ChEBI" id="CHEBI:58830"/>
    </ligand>
</feature>
<evidence type="ECO:0000255" key="1">
    <source>
        <dbReference type="HAMAP-Rule" id="MF_00178"/>
    </source>
</evidence>
<dbReference type="EC" id="2.5.1.78" evidence="1"/>
<dbReference type="EMBL" id="AM774415">
    <property type="protein sequence ID" value="CAP13401.1"/>
    <property type="molecule type" value="Genomic_DNA"/>
</dbReference>
<dbReference type="RefSeq" id="WP_010902429.1">
    <property type="nucleotide sequence ID" value="NC_010364.1"/>
</dbReference>
<dbReference type="SMR" id="B0R3T7"/>
<dbReference type="EnsemblBacteria" id="CAP13401">
    <property type="protein sequence ID" value="CAP13401"/>
    <property type="gene ID" value="OE_1946R"/>
</dbReference>
<dbReference type="GeneID" id="89349098"/>
<dbReference type="KEGG" id="hsl:OE_1946R"/>
<dbReference type="HOGENOM" id="CLU_089358_3_0_2"/>
<dbReference type="PhylomeDB" id="B0R3T7"/>
<dbReference type="UniPathway" id="UPA00275">
    <property type="reaction ID" value="UER00404"/>
</dbReference>
<dbReference type="Proteomes" id="UP000001321">
    <property type="component" value="Chromosome"/>
</dbReference>
<dbReference type="GO" id="GO:0009349">
    <property type="term" value="C:riboflavin synthase complex"/>
    <property type="evidence" value="ECO:0007669"/>
    <property type="project" value="InterPro"/>
</dbReference>
<dbReference type="GO" id="GO:0000906">
    <property type="term" value="F:6,7-dimethyl-8-ribityllumazine synthase activity"/>
    <property type="evidence" value="ECO:0007669"/>
    <property type="project" value="UniProtKB-UniRule"/>
</dbReference>
<dbReference type="GO" id="GO:0009231">
    <property type="term" value="P:riboflavin biosynthetic process"/>
    <property type="evidence" value="ECO:0007669"/>
    <property type="project" value="UniProtKB-UniRule"/>
</dbReference>
<dbReference type="Gene3D" id="3.40.50.960">
    <property type="entry name" value="Lumazine/riboflavin synthase"/>
    <property type="match status" value="1"/>
</dbReference>
<dbReference type="HAMAP" id="MF_00178">
    <property type="entry name" value="Lumazine_synth"/>
    <property type="match status" value="1"/>
</dbReference>
<dbReference type="InterPro" id="IPR034964">
    <property type="entry name" value="LS"/>
</dbReference>
<dbReference type="InterPro" id="IPR002180">
    <property type="entry name" value="LS/RS"/>
</dbReference>
<dbReference type="InterPro" id="IPR036467">
    <property type="entry name" value="LS/RS_sf"/>
</dbReference>
<dbReference type="NCBIfam" id="TIGR00114">
    <property type="entry name" value="lumazine-synth"/>
    <property type="match status" value="1"/>
</dbReference>
<dbReference type="PANTHER" id="PTHR21058:SF0">
    <property type="entry name" value="6,7-DIMETHYL-8-RIBITYLLUMAZINE SYNTHASE"/>
    <property type="match status" value="1"/>
</dbReference>
<dbReference type="PANTHER" id="PTHR21058">
    <property type="entry name" value="6,7-DIMETHYL-8-RIBITYLLUMAZINE SYNTHASE DMRL SYNTHASE LUMAZINE SYNTHASE"/>
    <property type="match status" value="1"/>
</dbReference>
<dbReference type="Pfam" id="PF00885">
    <property type="entry name" value="DMRL_synthase"/>
    <property type="match status" value="1"/>
</dbReference>
<dbReference type="SUPFAM" id="SSF52121">
    <property type="entry name" value="Lumazine synthase"/>
    <property type="match status" value="1"/>
</dbReference>
<accession>B0R3T7</accession>
<protein>
    <recommendedName>
        <fullName evidence="1">6,7-dimethyl-8-ribityllumazine synthase</fullName>
        <shortName evidence="1">DMRL synthase</shortName>
        <shortName evidence="1">LS</shortName>
        <shortName evidence="1">Lumazine synthase</shortName>
        <ecNumber evidence="1">2.5.1.78</ecNumber>
    </recommendedName>
</protein>
<organism>
    <name type="scientific">Halobacterium salinarum (strain ATCC 29341 / DSM 671 / R1)</name>
    <dbReference type="NCBI Taxonomy" id="478009"/>
    <lineage>
        <taxon>Archaea</taxon>
        <taxon>Methanobacteriati</taxon>
        <taxon>Methanobacteriota</taxon>
        <taxon>Stenosarchaea group</taxon>
        <taxon>Halobacteria</taxon>
        <taxon>Halobacteriales</taxon>
        <taxon>Halobacteriaceae</taxon>
        <taxon>Halobacterium</taxon>
        <taxon>Halobacterium salinarum NRC-34001</taxon>
    </lineage>
</organism>
<proteinExistence type="inferred from homology"/>
<reference key="1">
    <citation type="journal article" date="2008" name="Genomics">
        <title>Evolution in the laboratory: the genome of Halobacterium salinarum strain R1 compared to that of strain NRC-1.</title>
        <authorList>
            <person name="Pfeiffer F."/>
            <person name="Schuster S.C."/>
            <person name="Broicher A."/>
            <person name="Falb M."/>
            <person name="Palm P."/>
            <person name="Rodewald K."/>
            <person name="Ruepp A."/>
            <person name="Soppa J."/>
            <person name="Tittor J."/>
            <person name="Oesterhelt D."/>
        </authorList>
    </citation>
    <scope>NUCLEOTIDE SEQUENCE [LARGE SCALE GENOMIC DNA]</scope>
    <source>
        <strain>ATCC 29341 / DSM 671 / R1</strain>
    </source>
</reference>
<comment type="function">
    <text evidence="1">Catalyzes the formation of 6,7-dimethyl-8-ribityllumazine by condensation of 5-amino-6-(D-ribitylamino)uracil with 3,4-dihydroxy-2-butanone 4-phosphate. This is the penultimate step in the biosynthesis of riboflavin.</text>
</comment>
<comment type="catalytic activity">
    <reaction evidence="1">
        <text>(2S)-2-hydroxy-3-oxobutyl phosphate + 5-amino-6-(D-ribitylamino)uracil = 6,7-dimethyl-8-(1-D-ribityl)lumazine + phosphate + 2 H2O + H(+)</text>
        <dbReference type="Rhea" id="RHEA:26152"/>
        <dbReference type="ChEBI" id="CHEBI:15377"/>
        <dbReference type="ChEBI" id="CHEBI:15378"/>
        <dbReference type="ChEBI" id="CHEBI:15934"/>
        <dbReference type="ChEBI" id="CHEBI:43474"/>
        <dbReference type="ChEBI" id="CHEBI:58201"/>
        <dbReference type="ChEBI" id="CHEBI:58830"/>
        <dbReference type="EC" id="2.5.1.78"/>
    </reaction>
</comment>
<comment type="pathway">
    <text evidence="1">Cofactor biosynthesis; riboflavin biosynthesis; riboflavin from 2-hydroxy-3-oxobutyl phosphate and 5-amino-6-(D-ribitylamino)uracil: step 1/2.</text>
</comment>
<comment type="similarity">
    <text evidence="1">Belongs to the DMRL synthase family.</text>
</comment>
<keyword id="KW-0686">Riboflavin biosynthesis</keyword>
<keyword id="KW-0808">Transferase</keyword>
<name>RISB_HALS3</name>
<sequence>MTRLGLVVAEFNRSVTERMEAAAREAAADADAAITDTVHVPGAYDSPLAADRLARRDDIDAVAVVGAIVTGDTDHDHVIASATADTLTDVSLERDTPVTFGVSGPGMSGAEARERVEKGAAAVESAVSLTQEL</sequence>
<gene>
    <name evidence="1" type="primary">ribH</name>
    <name type="ordered locus">OE_1946R</name>
</gene>